<gene>
    <name evidence="1" type="primary">leuC</name>
    <name type="ordered locus">plu3675</name>
</gene>
<comment type="function">
    <text evidence="1">Catalyzes the isomerization between 2-isopropylmalate and 3-isopropylmalate, via the formation of 2-isopropylmaleate.</text>
</comment>
<comment type="catalytic activity">
    <reaction evidence="1">
        <text>(2R,3S)-3-isopropylmalate = (2S)-2-isopropylmalate</text>
        <dbReference type="Rhea" id="RHEA:32287"/>
        <dbReference type="ChEBI" id="CHEBI:1178"/>
        <dbReference type="ChEBI" id="CHEBI:35121"/>
        <dbReference type="EC" id="4.2.1.33"/>
    </reaction>
</comment>
<comment type="cofactor">
    <cofactor evidence="1">
        <name>[4Fe-4S] cluster</name>
        <dbReference type="ChEBI" id="CHEBI:49883"/>
    </cofactor>
    <text evidence="1">Binds 1 [4Fe-4S] cluster per subunit.</text>
</comment>
<comment type="pathway">
    <text evidence="1">Amino-acid biosynthesis; L-leucine biosynthesis; L-leucine from 3-methyl-2-oxobutanoate: step 2/4.</text>
</comment>
<comment type="subunit">
    <text evidence="1">Heterodimer of LeuC and LeuD.</text>
</comment>
<comment type="similarity">
    <text evidence="1">Belongs to the aconitase/IPM isomerase family. LeuC type 1 subfamily.</text>
</comment>
<protein>
    <recommendedName>
        <fullName evidence="1">3-isopropylmalate dehydratase large subunit</fullName>
        <ecNumber evidence="1">4.2.1.33</ecNumber>
    </recommendedName>
    <alternativeName>
        <fullName evidence="1">Alpha-IPM isomerase</fullName>
        <shortName evidence="1">IPMI</shortName>
    </alternativeName>
    <alternativeName>
        <fullName evidence="1">Isopropylmalate isomerase</fullName>
    </alternativeName>
</protein>
<dbReference type="EC" id="4.2.1.33" evidence="1"/>
<dbReference type="EMBL" id="BX571871">
    <property type="protein sequence ID" value="CAE16048.1"/>
    <property type="molecule type" value="Genomic_DNA"/>
</dbReference>
<dbReference type="RefSeq" id="WP_011147838.1">
    <property type="nucleotide sequence ID" value="NC_005126.1"/>
</dbReference>
<dbReference type="SMR" id="Q7N127"/>
<dbReference type="STRING" id="243265.plu3675"/>
<dbReference type="GeneID" id="48849918"/>
<dbReference type="KEGG" id="plu:plu3675"/>
<dbReference type="eggNOG" id="COG0065">
    <property type="taxonomic scope" value="Bacteria"/>
</dbReference>
<dbReference type="HOGENOM" id="CLU_006714_3_4_6"/>
<dbReference type="OrthoDB" id="9802769at2"/>
<dbReference type="UniPathway" id="UPA00048">
    <property type="reaction ID" value="UER00071"/>
</dbReference>
<dbReference type="Proteomes" id="UP000002514">
    <property type="component" value="Chromosome"/>
</dbReference>
<dbReference type="GO" id="GO:0003861">
    <property type="term" value="F:3-isopropylmalate dehydratase activity"/>
    <property type="evidence" value="ECO:0007669"/>
    <property type="project" value="UniProtKB-UniRule"/>
</dbReference>
<dbReference type="GO" id="GO:0051539">
    <property type="term" value="F:4 iron, 4 sulfur cluster binding"/>
    <property type="evidence" value="ECO:0007669"/>
    <property type="project" value="UniProtKB-KW"/>
</dbReference>
<dbReference type="GO" id="GO:0046872">
    <property type="term" value="F:metal ion binding"/>
    <property type="evidence" value="ECO:0007669"/>
    <property type="project" value="UniProtKB-KW"/>
</dbReference>
<dbReference type="GO" id="GO:0009098">
    <property type="term" value="P:L-leucine biosynthetic process"/>
    <property type="evidence" value="ECO:0007669"/>
    <property type="project" value="UniProtKB-UniRule"/>
</dbReference>
<dbReference type="CDD" id="cd01583">
    <property type="entry name" value="IPMI"/>
    <property type="match status" value="1"/>
</dbReference>
<dbReference type="FunFam" id="3.30.499.10:FF:000006">
    <property type="entry name" value="3-isopropylmalate dehydratase large subunit"/>
    <property type="match status" value="1"/>
</dbReference>
<dbReference type="FunFam" id="3.30.499.10:FF:000007">
    <property type="entry name" value="3-isopropylmalate dehydratase large subunit"/>
    <property type="match status" value="1"/>
</dbReference>
<dbReference type="Gene3D" id="3.30.499.10">
    <property type="entry name" value="Aconitase, domain 3"/>
    <property type="match status" value="2"/>
</dbReference>
<dbReference type="HAMAP" id="MF_01026">
    <property type="entry name" value="LeuC_type1"/>
    <property type="match status" value="1"/>
</dbReference>
<dbReference type="InterPro" id="IPR004430">
    <property type="entry name" value="3-IsopropMal_deHydase_lsu"/>
</dbReference>
<dbReference type="InterPro" id="IPR015931">
    <property type="entry name" value="Acnase/IPM_dHydase_lsu_aba_1/3"/>
</dbReference>
<dbReference type="InterPro" id="IPR001030">
    <property type="entry name" value="Acoase/IPM_deHydtase_lsu_aba"/>
</dbReference>
<dbReference type="InterPro" id="IPR018136">
    <property type="entry name" value="Aconitase_4Fe-4S_BS"/>
</dbReference>
<dbReference type="InterPro" id="IPR036008">
    <property type="entry name" value="Aconitase_4Fe-4S_dom"/>
</dbReference>
<dbReference type="InterPro" id="IPR050067">
    <property type="entry name" value="IPM_dehydratase_rel_enz"/>
</dbReference>
<dbReference type="InterPro" id="IPR033941">
    <property type="entry name" value="IPMI_cat"/>
</dbReference>
<dbReference type="NCBIfam" id="TIGR00170">
    <property type="entry name" value="leuC"/>
    <property type="match status" value="1"/>
</dbReference>
<dbReference type="NCBIfam" id="NF004016">
    <property type="entry name" value="PRK05478.1"/>
    <property type="match status" value="1"/>
</dbReference>
<dbReference type="NCBIfam" id="NF009116">
    <property type="entry name" value="PRK12466.1"/>
    <property type="match status" value="1"/>
</dbReference>
<dbReference type="PANTHER" id="PTHR43822:SF9">
    <property type="entry name" value="3-ISOPROPYLMALATE DEHYDRATASE"/>
    <property type="match status" value="1"/>
</dbReference>
<dbReference type="PANTHER" id="PTHR43822">
    <property type="entry name" value="HOMOACONITASE, MITOCHONDRIAL-RELATED"/>
    <property type="match status" value="1"/>
</dbReference>
<dbReference type="Pfam" id="PF00330">
    <property type="entry name" value="Aconitase"/>
    <property type="match status" value="1"/>
</dbReference>
<dbReference type="PRINTS" id="PR00415">
    <property type="entry name" value="ACONITASE"/>
</dbReference>
<dbReference type="SUPFAM" id="SSF53732">
    <property type="entry name" value="Aconitase iron-sulfur domain"/>
    <property type="match status" value="1"/>
</dbReference>
<dbReference type="PROSITE" id="PS00450">
    <property type="entry name" value="ACONITASE_1"/>
    <property type="match status" value="1"/>
</dbReference>
<dbReference type="PROSITE" id="PS01244">
    <property type="entry name" value="ACONITASE_2"/>
    <property type="match status" value="1"/>
</dbReference>
<proteinExistence type="inferred from homology"/>
<sequence length="469" mass="50478">MAKTLYQKLYDAHIVREVPNETPLLYIDRHLVHEVTSPQAFDGLRTKGRPVHQPGKTFATMDHNVSTQTKDINACGDMARIQMQELMKNCAEFGITLYDLNHPYQGIVHVIGPEQGITLPGMTIVCGDSHTATHGAFGSLAFGIGTSEVEHVLASQTLKQARAKTMKIEVMGDVGDAITAKDIVLAIIGKTGSAGGTGYVVEFCGKAIEALSMEGRMTLCNMAIEMGAKAGLVAPDETTFTYMKGRQFSPKGELWEQAVAYWKTLKSDPDAQYDTIVTINAEEISPQVTWGTNPGQVIAIDQTIPAPESFSDPVERASAEKALAYMDLKPGIKLTDVKIDKVFIGSCTNSRIEDLRAAAAIAQGHKVAPGVQAIVVPGSGPVQAQAEAEGLDKIFIEAGFEWRLPGCSMCLAMNNDRLQPGERCASTSNRNFEGRQGRGGRTHLVSPAMAAAAAINGHFIDIRHPAQKS</sequence>
<feature type="chain" id="PRO_0000076778" description="3-isopropylmalate dehydratase large subunit">
    <location>
        <begin position="1"/>
        <end position="469"/>
    </location>
</feature>
<feature type="binding site" evidence="1">
    <location>
        <position position="347"/>
    </location>
    <ligand>
        <name>[4Fe-4S] cluster</name>
        <dbReference type="ChEBI" id="CHEBI:49883"/>
    </ligand>
</feature>
<feature type="binding site" evidence="1">
    <location>
        <position position="407"/>
    </location>
    <ligand>
        <name>[4Fe-4S] cluster</name>
        <dbReference type="ChEBI" id="CHEBI:49883"/>
    </ligand>
</feature>
<feature type="binding site" evidence="1">
    <location>
        <position position="410"/>
    </location>
    <ligand>
        <name>[4Fe-4S] cluster</name>
        <dbReference type="ChEBI" id="CHEBI:49883"/>
    </ligand>
</feature>
<keyword id="KW-0004">4Fe-4S</keyword>
<keyword id="KW-0028">Amino-acid biosynthesis</keyword>
<keyword id="KW-0100">Branched-chain amino acid biosynthesis</keyword>
<keyword id="KW-0408">Iron</keyword>
<keyword id="KW-0411">Iron-sulfur</keyword>
<keyword id="KW-0432">Leucine biosynthesis</keyword>
<keyword id="KW-0456">Lyase</keyword>
<keyword id="KW-0479">Metal-binding</keyword>
<keyword id="KW-1185">Reference proteome</keyword>
<accession>Q7N127</accession>
<reference key="1">
    <citation type="journal article" date="2003" name="Nat. Biotechnol.">
        <title>The genome sequence of the entomopathogenic bacterium Photorhabdus luminescens.</title>
        <authorList>
            <person name="Duchaud E."/>
            <person name="Rusniok C."/>
            <person name="Frangeul L."/>
            <person name="Buchrieser C."/>
            <person name="Givaudan A."/>
            <person name="Taourit S."/>
            <person name="Bocs S."/>
            <person name="Boursaux-Eude C."/>
            <person name="Chandler M."/>
            <person name="Charles J.-F."/>
            <person name="Dassa E."/>
            <person name="Derose R."/>
            <person name="Derzelle S."/>
            <person name="Freyssinet G."/>
            <person name="Gaudriault S."/>
            <person name="Medigue C."/>
            <person name="Lanois A."/>
            <person name="Powell K."/>
            <person name="Siguier P."/>
            <person name="Vincent R."/>
            <person name="Wingate V."/>
            <person name="Zouine M."/>
            <person name="Glaser P."/>
            <person name="Boemare N."/>
            <person name="Danchin A."/>
            <person name="Kunst F."/>
        </authorList>
    </citation>
    <scope>NUCLEOTIDE SEQUENCE [LARGE SCALE GENOMIC DNA]</scope>
    <source>
        <strain>DSM 15139 / CIP 105565 / TT01</strain>
    </source>
</reference>
<evidence type="ECO:0000255" key="1">
    <source>
        <dbReference type="HAMAP-Rule" id="MF_01026"/>
    </source>
</evidence>
<name>LEUC_PHOLL</name>
<organism>
    <name type="scientific">Photorhabdus laumondii subsp. laumondii (strain DSM 15139 / CIP 105565 / TT01)</name>
    <name type="common">Photorhabdus luminescens subsp. laumondii</name>
    <dbReference type="NCBI Taxonomy" id="243265"/>
    <lineage>
        <taxon>Bacteria</taxon>
        <taxon>Pseudomonadati</taxon>
        <taxon>Pseudomonadota</taxon>
        <taxon>Gammaproteobacteria</taxon>
        <taxon>Enterobacterales</taxon>
        <taxon>Morganellaceae</taxon>
        <taxon>Photorhabdus</taxon>
    </lineage>
</organism>